<keyword id="KW-0997">Cell inner membrane</keyword>
<keyword id="KW-1003">Cell membrane</keyword>
<keyword id="KW-0170">Cobalt</keyword>
<keyword id="KW-0171">Cobalt transport</keyword>
<keyword id="KW-0406">Ion transport</keyword>
<keyword id="KW-0472">Membrane</keyword>
<keyword id="KW-0533">Nickel</keyword>
<keyword id="KW-0921">Nickel transport</keyword>
<keyword id="KW-0812">Transmembrane</keyword>
<keyword id="KW-1133">Transmembrane helix</keyword>
<keyword id="KW-0813">Transport</keyword>
<organism>
    <name type="scientific">Escherichia coli (strain UTI89 / UPEC)</name>
    <dbReference type="NCBI Taxonomy" id="364106"/>
    <lineage>
        <taxon>Bacteria</taxon>
        <taxon>Pseudomonadati</taxon>
        <taxon>Pseudomonadota</taxon>
        <taxon>Gammaproteobacteria</taxon>
        <taxon>Enterobacterales</taxon>
        <taxon>Enterobacteriaceae</taxon>
        <taxon>Escherichia</taxon>
    </lineage>
</organism>
<protein>
    <recommendedName>
        <fullName>Nickel/cobalt efflux system RcnA</fullName>
    </recommendedName>
</protein>
<proteinExistence type="inferred from homology"/>
<dbReference type="EMBL" id="CP000243">
    <property type="protein sequence ID" value="ABE07848.1"/>
    <property type="molecule type" value="Genomic_DNA"/>
</dbReference>
<dbReference type="RefSeq" id="WP_000134614.1">
    <property type="nucleotide sequence ID" value="NZ_CP064825.1"/>
</dbReference>
<dbReference type="KEGG" id="eci:UTI89_C2380"/>
<dbReference type="HOGENOM" id="CLU_058605_2_0_6"/>
<dbReference type="Proteomes" id="UP000001952">
    <property type="component" value="Chromosome"/>
</dbReference>
<dbReference type="GO" id="GO:0005886">
    <property type="term" value="C:plasma membrane"/>
    <property type="evidence" value="ECO:0007669"/>
    <property type="project" value="UniProtKB-SubCell"/>
</dbReference>
<dbReference type="GO" id="GO:0046583">
    <property type="term" value="F:monoatomic cation efflux transmembrane transporter activity"/>
    <property type="evidence" value="ECO:0007669"/>
    <property type="project" value="TreeGrafter"/>
</dbReference>
<dbReference type="GO" id="GO:0015099">
    <property type="term" value="F:nickel cation transmembrane transporter activity"/>
    <property type="evidence" value="ECO:0007669"/>
    <property type="project" value="InterPro"/>
</dbReference>
<dbReference type="GO" id="GO:0006824">
    <property type="term" value="P:cobalt ion transport"/>
    <property type="evidence" value="ECO:0007669"/>
    <property type="project" value="UniProtKB-KW"/>
</dbReference>
<dbReference type="GO" id="GO:0032025">
    <property type="term" value="P:response to cobalt ion"/>
    <property type="evidence" value="ECO:0007669"/>
    <property type="project" value="TreeGrafter"/>
</dbReference>
<dbReference type="GO" id="GO:0010045">
    <property type="term" value="P:response to nickel cation"/>
    <property type="evidence" value="ECO:0007669"/>
    <property type="project" value="TreeGrafter"/>
</dbReference>
<dbReference type="InterPro" id="IPR011541">
    <property type="entry name" value="Ni/Co_transpt_high_affinity"/>
</dbReference>
<dbReference type="InterPro" id="IPR051224">
    <property type="entry name" value="NiCoT_RcnA"/>
</dbReference>
<dbReference type="NCBIfam" id="NF007454">
    <property type="entry name" value="PRK10019.1"/>
    <property type="match status" value="1"/>
</dbReference>
<dbReference type="PANTHER" id="PTHR40659">
    <property type="entry name" value="NICKEL/COBALT EFFLUX SYSTEM RCNA"/>
    <property type="match status" value="1"/>
</dbReference>
<dbReference type="PANTHER" id="PTHR40659:SF1">
    <property type="entry name" value="NICKEL_COBALT EFFLUX SYSTEM RCNA"/>
    <property type="match status" value="1"/>
</dbReference>
<dbReference type="Pfam" id="PF03824">
    <property type="entry name" value="NicO"/>
    <property type="match status" value="1"/>
</dbReference>
<evidence type="ECO:0000250" key="1"/>
<evidence type="ECO:0000255" key="2"/>
<evidence type="ECO:0000256" key="3">
    <source>
        <dbReference type="SAM" id="MobiDB-lite"/>
    </source>
</evidence>
<evidence type="ECO:0000305" key="4"/>
<reference key="1">
    <citation type="journal article" date="2006" name="Proc. Natl. Acad. Sci. U.S.A.">
        <title>Identification of genes subject to positive selection in uropathogenic strains of Escherichia coli: a comparative genomics approach.</title>
        <authorList>
            <person name="Chen S.L."/>
            <person name="Hung C.-S."/>
            <person name="Xu J."/>
            <person name="Reigstad C.S."/>
            <person name="Magrini V."/>
            <person name="Sabo A."/>
            <person name="Blasiar D."/>
            <person name="Bieri T."/>
            <person name="Meyer R.R."/>
            <person name="Ozersky P."/>
            <person name="Armstrong J.R."/>
            <person name="Fulton R.S."/>
            <person name="Latreille J.P."/>
            <person name="Spieth J."/>
            <person name="Hooton T.M."/>
            <person name="Mardis E.R."/>
            <person name="Hultgren S.J."/>
            <person name="Gordon J.I."/>
        </authorList>
    </citation>
    <scope>NUCLEOTIDE SEQUENCE [LARGE SCALE GENOMIC DNA]</scope>
    <source>
        <strain>UTI89 / UPEC</strain>
    </source>
</reference>
<feature type="chain" id="PRO_0000333783" description="Nickel/cobalt efflux system RcnA">
    <location>
        <begin position="1"/>
        <end position="274"/>
    </location>
</feature>
<feature type="topological domain" description="Periplasmic" evidence="2">
    <location>
        <begin position="1"/>
        <end position="12"/>
    </location>
</feature>
<feature type="transmembrane region" description="Helical" evidence="2">
    <location>
        <begin position="13"/>
        <end position="33"/>
    </location>
</feature>
<feature type="topological domain" description="Cytoplasmic" evidence="2">
    <location>
        <begin position="34"/>
        <end position="56"/>
    </location>
</feature>
<feature type="transmembrane region" description="Helical" evidence="2">
    <location>
        <begin position="57"/>
        <end position="77"/>
    </location>
</feature>
<feature type="topological domain" description="Periplasmic" evidence="2">
    <location>
        <begin position="78"/>
        <end position="86"/>
    </location>
</feature>
<feature type="transmembrane region" description="Helical" evidence="2">
    <location>
        <begin position="87"/>
        <end position="107"/>
    </location>
</feature>
<feature type="topological domain" description="Cytoplasmic" evidence="2">
    <location>
        <begin position="108"/>
        <end position="174"/>
    </location>
</feature>
<feature type="transmembrane region" description="Helical" evidence="2">
    <location>
        <begin position="175"/>
        <end position="195"/>
    </location>
</feature>
<feature type="topological domain" description="Periplasmic" evidence="2">
    <location>
        <begin position="196"/>
        <end position="209"/>
    </location>
</feature>
<feature type="transmembrane region" description="Helical" evidence="2">
    <location>
        <begin position="210"/>
        <end position="230"/>
    </location>
</feature>
<feature type="topological domain" description="Cytoplasmic" evidence="2">
    <location>
        <begin position="231"/>
        <end position="251"/>
    </location>
</feature>
<feature type="transmembrane region" description="Helical" evidence="2">
    <location>
        <begin position="252"/>
        <end position="272"/>
    </location>
</feature>
<feature type="topological domain" description="Periplasmic" evidence="2">
    <location>
        <begin position="273"/>
        <end position="274"/>
    </location>
</feature>
<feature type="region of interest" description="Disordered" evidence="3">
    <location>
        <begin position="127"/>
        <end position="153"/>
    </location>
</feature>
<feature type="compositionally biased region" description="Basic and acidic residues" evidence="3">
    <location>
        <begin position="127"/>
        <end position="137"/>
    </location>
</feature>
<accession>Q1R9W6</accession>
<comment type="function">
    <text evidence="1">Efflux system for nickel and cobalt.</text>
</comment>
<comment type="subcellular location">
    <subcellularLocation>
        <location evidence="1">Cell inner membrane</location>
        <topology evidence="1">Multi-pass membrane protein</topology>
    </subcellularLocation>
</comment>
<comment type="induction">
    <text evidence="1">By nickel and cobalt. Transcriptionally repressed by RcnR (By similarity).</text>
</comment>
<comment type="similarity">
    <text evidence="4">Belongs to the NiCoT transporter (TC 2.A.52) family. RcnA subfamily.</text>
</comment>
<sequence>MTEFTTLLQQGNAWFFIPSAILLGALHGLEPGHSKTMMAAFIIAIKGTIKQAVMLGLAATISHTAVVWLIAFGGMVISKRFTAQSAEPWLQLISAVIIISTAFWMFWRTWRGERNWLENMHEHDHEHHHHDHEDHHDHGHHHHHEHGEYQDAHARAHANDIKRRFDGREVTNWQILLFGLTGGLIPCPAAITVLLICIQLKALTLGATLVVSFSLGLALTLVTVGVGAAISVQQVAKRWSGFNTLAKRAPYFSSLLIGLVGVYMGVHGFMGIMR</sequence>
<name>RCNA_ECOUT</name>
<gene>
    <name type="primary">rcnA</name>
    <name type="ordered locus">UTI89_C2380</name>
</gene>